<accession>P62570</accession>
<accession>P56234</accession>
<organism>
    <name type="scientific">Ranoidea gilleni</name>
    <name type="common">Centralian tree frog</name>
    <name type="synonym">Litoria gilleni</name>
    <dbReference type="NCBI Taxonomy" id="39405"/>
    <lineage>
        <taxon>Eukaryota</taxon>
        <taxon>Metazoa</taxon>
        <taxon>Chordata</taxon>
        <taxon>Craniata</taxon>
        <taxon>Vertebrata</taxon>
        <taxon>Euteleostomi</taxon>
        <taxon>Amphibia</taxon>
        <taxon>Batrachia</taxon>
        <taxon>Anura</taxon>
        <taxon>Neobatrachia</taxon>
        <taxon>Hyloidea</taxon>
        <taxon>Hylidae</taxon>
        <taxon>Pelodryadinae</taxon>
        <taxon>Ranoidea</taxon>
    </lineage>
</organism>
<protein>
    <recommendedName>
        <fullName>Caerin-2.2</fullName>
    </recommendedName>
    <component>
        <recommendedName>
            <fullName>Caerin-2.2.1</fullName>
        </recommendedName>
    </component>
</protein>
<evidence type="ECO:0000269" key="1">
    <source ref="1"/>
</evidence>
<evidence type="ECO:0000305" key="2"/>
<sequence length="25" mass="2466">GLVSSIGRALGGLLADVVKSKEQPA</sequence>
<feature type="peptide" id="PRO_0000010188" description="Caerin-2.2">
    <location>
        <begin position="1"/>
        <end position="25"/>
    </location>
</feature>
<feature type="peptide" id="PRO_0000010189" description="Caerin-2.2.1">
    <location>
        <begin position="9"/>
        <end position="25"/>
    </location>
</feature>
<keyword id="KW-0878">Amphibian defense peptide</keyword>
<keyword id="KW-0044">Antibiotic</keyword>
<keyword id="KW-0929">Antimicrobial</keyword>
<keyword id="KW-0903">Direct protein sequencing</keyword>
<keyword id="KW-0964">Secreted</keyword>
<reference key="1">
    <citation type="journal article" date="1993" name="J. Chem. Res.">
        <title>Peptides from Australian frogs. The structures of the caerins and caeridins from Litoria gilleni.</title>
        <authorList>
            <person name="Waugh R.J."/>
            <person name="Stone D.J.M."/>
            <person name="Bowie J.H."/>
            <person name="Wallace J.C."/>
            <person name="Tyler M.J."/>
        </authorList>
    </citation>
    <scope>PROTEIN SEQUENCE</scope>
    <scope>MASS SPECTROMETRY</scope>
    <source>
        <tissue>Parotoid gland</tissue>
    </source>
</reference>
<name>CR22_RANGI</name>
<proteinExistence type="evidence at protein level"/>
<comment type="function">
    <text>Antimicrobial peptide, that adopts an alpha helical conformation which can disrupt bacterial membranes. Each caerin displays a different antimicrobial specificity.</text>
</comment>
<comment type="subcellular location">
    <subcellularLocation>
        <location>Secreted</location>
    </subcellularLocation>
</comment>
<comment type="tissue specificity">
    <text>Expressed by the skin parotoid and/or rostral glands.</text>
</comment>
<comment type="mass spectrometry" mass="1695.0" method="FAB" evidence="1">
    <molecule>Caerin-2.2.1</molecule>
</comment>
<comment type="similarity">
    <text evidence="2">Belongs to the frog skin active peptide (FSAP) family. Caerin subfamily.</text>
</comment>
<dbReference type="GO" id="GO:0005576">
    <property type="term" value="C:extracellular region"/>
    <property type="evidence" value="ECO:0007669"/>
    <property type="project" value="UniProtKB-SubCell"/>
</dbReference>
<dbReference type="GO" id="GO:0042742">
    <property type="term" value="P:defense response to bacterium"/>
    <property type="evidence" value="ECO:0007669"/>
    <property type="project" value="UniProtKB-KW"/>
</dbReference>
<dbReference type="InterPro" id="IPR032021">
    <property type="entry name" value="Frog_Litoria"/>
</dbReference>
<dbReference type="Pfam" id="PF16049">
    <property type="entry name" value="Antimicrobial24"/>
    <property type="match status" value="1"/>
</dbReference>